<protein>
    <recommendedName>
        <fullName>Altered inheritance of mitochondria protein 34, mitochondrial</fullName>
    </recommendedName>
</protein>
<keyword id="KW-0472">Membrane</keyword>
<keyword id="KW-0496">Mitochondrion</keyword>
<keyword id="KW-1185">Reference proteome</keyword>
<keyword id="KW-0809">Transit peptide</keyword>
<keyword id="KW-0812">Transmembrane</keyword>
<keyword id="KW-1133">Transmembrane helix</keyword>
<gene>
    <name type="primary">AIM34</name>
    <name type="ordered locus">KLLA0C06072g</name>
</gene>
<reference key="1">
    <citation type="journal article" date="2004" name="Nature">
        <title>Genome evolution in yeasts.</title>
        <authorList>
            <person name="Dujon B."/>
            <person name="Sherman D."/>
            <person name="Fischer G."/>
            <person name="Durrens P."/>
            <person name="Casaregola S."/>
            <person name="Lafontaine I."/>
            <person name="de Montigny J."/>
            <person name="Marck C."/>
            <person name="Neuveglise C."/>
            <person name="Talla E."/>
            <person name="Goffard N."/>
            <person name="Frangeul L."/>
            <person name="Aigle M."/>
            <person name="Anthouard V."/>
            <person name="Babour A."/>
            <person name="Barbe V."/>
            <person name="Barnay S."/>
            <person name="Blanchin S."/>
            <person name="Beckerich J.-M."/>
            <person name="Beyne E."/>
            <person name="Bleykasten C."/>
            <person name="Boisrame A."/>
            <person name="Boyer J."/>
            <person name="Cattolico L."/>
            <person name="Confanioleri F."/>
            <person name="de Daruvar A."/>
            <person name="Despons L."/>
            <person name="Fabre E."/>
            <person name="Fairhead C."/>
            <person name="Ferry-Dumazet H."/>
            <person name="Groppi A."/>
            <person name="Hantraye F."/>
            <person name="Hennequin C."/>
            <person name="Jauniaux N."/>
            <person name="Joyet P."/>
            <person name="Kachouri R."/>
            <person name="Kerrest A."/>
            <person name="Koszul R."/>
            <person name="Lemaire M."/>
            <person name="Lesur I."/>
            <person name="Ma L."/>
            <person name="Muller H."/>
            <person name="Nicaud J.-M."/>
            <person name="Nikolski M."/>
            <person name="Oztas S."/>
            <person name="Ozier-Kalogeropoulos O."/>
            <person name="Pellenz S."/>
            <person name="Potier S."/>
            <person name="Richard G.-F."/>
            <person name="Straub M.-L."/>
            <person name="Suleau A."/>
            <person name="Swennen D."/>
            <person name="Tekaia F."/>
            <person name="Wesolowski-Louvel M."/>
            <person name="Westhof E."/>
            <person name="Wirth B."/>
            <person name="Zeniou-Meyer M."/>
            <person name="Zivanovic Y."/>
            <person name="Bolotin-Fukuhara M."/>
            <person name="Thierry A."/>
            <person name="Bouchier C."/>
            <person name="Caudron B."/>
            <person name="Scarpelli C."/>
            <person name="Gaillardin C."/>
            <person name="Weissenbach J."/>
            <person name="Wincker P."/>
            <person name="Souciet J.-L."/>
        </authorList>
    </citation>
    <scope>NUCLEOTIDE SEQUENCE [LARGE SCALE GENOMIC DNA]</scope>
    <source>
        <strain>ATCC 8585 / CBS 2359 / DSM 70799 / NBRC 1267 / NRRL Y-1140 / WM37</strain>
    </source>
</reference>
<organism>
    <name type="scientific">Kluyveromyces lactis (strain ATCC 8585 / CBS 2359 / DSM 70799 / NBRC 1267 / NRRL Y-1140 / WM37)</name>
    <name type="common">Yeast</name>
    <name type="synonym">Candida sphaerica</name>
    <dbReference type="NCBI Taxonomy" id="284590"/>
    <lineage>
        <taxon>Eukaryota</taxon>
        <taxon>Fungi</taxon>
        <taxon>Dikarya</taxon>
        <taxon>Ascomycota</taxon>
        <taxon>Saccharomycotina</taxon>
        <taxon>Saccharomycetes</taxon>
        <taxon>Saccharomycetales</taxon>
        <taxon>Saccharomycetaceae</taxon>
        <taxon>Kluyveromyces</taxon>
    </lineage>
</organism>
<accession>Q6CUC1</accession>
<comment type="subcellular location">
    <subcellularLocation>
        <location evidence="1">Mitochondrion membrane</location>
        <topology evidence="1">Single-pass membrane protein</topology>
    </subcellularLocation>
</comment>
<comment type="similarity">
    <text evidence="5">Belongs to the AIM34 family.</text>
</comment>
<sequence>MSLRKVRSLPSLRVLAEVSNPLVRVPPPSFTYQTRQVHNTKKNEHSPMLSSDSHASFTRMSLKTLKNECRTRGLKVSGKKTELVERILLFEGSSSKKLHTSAIQRAKNDSSHIDSMKIPNVAKLEAEAESRKTDYIVKVPSIVNNAATEPKTKIEKDYEKKLQPADKKPLAENVGTVATPDADNVIQTPSVSDSIKVVNPEEELRSGSSEQGRSYSQQDEELTSRDKKFLLGFAGTVAAWWSLRFWKKEESKK</sequence>
<proteinExistence type="inferred from homology"/>
<feature type="transit peptide" description="Mitochondrion" evidence="2">
    <location>
        <begin position="1"/>
        <end position="44"/>
    </location>
</feature>
<feature type="chain" id="PRO_0000399709" description="Altered inheritance of mitochondria protein 34, mitochondrial">
    <location>
        <begin position="45"/>
        <end position="253"/>
    </location>
</feature>
<feature type="transmembrane region" description="Helical" evidence="2">
    <location>
        <begin position="229"/>
        <end position="246"/>
    </location>
</feature>
<feature type="domain" description="SAP" evidence="3">
    <location>
        <begin position="57"/>
        <end position="91"/>
    </location>
</feature>
<feature type="region of interest" description="Disordered" evidence="4">
    <location>
        <begin position="183"/>
        <end position="221"/>
    </location>
</feature>
<feature type="compositionally biased region" description="Polar residues" evidence="4">
    <location>
        <begin position="206"/>
        <end position="217"/>
    </location>
</feature>
<evidence type="ECO:0000250" key="1"/>
<evidence type="ECO:0000255" key="2"/>
<evidence type="ECO:0000255" key="3">
    <source>
        <dbReference type="PROSITE-ProRule" id="PRU00186"/>
    </source>
</evidence>
<evidence type="ECO:0000256" key="4">
    <source>
        <dbReference type="SAM" id="MobiDB-lite"/>
    </source>
</evidence>
<evidence type="ECO:0000305" key="5"/>
<name>AIM34_KLULA</name>
<dbReference type="EMBL" id="CR382123">
    <property type="protein sequence ID" value="CAH01319.1"/>
    <property type="molecule type" value="Genomic_DNA"/>
</dbReference>
<dbReference type="RefSeq" id="XP_452468.1">
    <property type="nucleotide sequence ID" value="XM_452468.1"/>
</dbReference>
<dbReference type="SMR" id="Q6CUC1"/>
<dbReference type="FunCoup" id="Q6CUC1">
    <property type="interactions" value="45"/>
</dbReference>
<dbReference type="STRING" id="284590.Q6CUC1"/>
<dbReference type="PaxDb" id="284590-Q6CUC1"/>
<dbReference type="KEGG" id="kla:KLLA0_C06072g"/>
<dbReference type="eggNOG" id="ENOG502S5IP">
    <property type="taxonomic scope" value="Eukaryota"/>
</dbReference>
<dbReference type="HOGENOM" id="CLU_1098634_0_0_1"/>
<dbReference type="InParanoid" id="Q6CUC1"/>
<dbReference type="OMA" id="KNECRTR"/>
<dbReference type="Proteomes" id="UP000000598">
    <property type="component" value="Chromosome C"/>
</dbReference>
<dbReference type="GO" id="GO:0031966">
    <property type="term" value="C:mitochondrial membrane"/>
    <property type="evidence" value="ECO:0007669"/>
    <property type="project" value="UniProtKB-SubCell"/>
</dbReference>
<dbReference type="Gene3D" id="1.10.720.30">
    <property type="entry name" value="SAP domain"/>
    <property type="match status" value="1"/>
</dbReference>
<dbReference type="InterPro" id="IPR003034">
    <property type="entry name" value="SAP_dom"/>
</dbReference>
<dbReference type="InterPro" id="IPR036361">
    <property type="entry name" value="SAP_dom_sf"/>
</dbReference>
<dbReference type="Pfam" id="PF02037">
    <property type="entry name" value="SAP"/>
    <property type="match status" value="1"/>
</dbReference>
<dbReference type="SMART" id="SM00513">
    <property type="entry name" value="SAP"/>
    <property type="match status" value="1"/>
</dbReference>
<dbReference type="SUPFAM" id="SSF68906">
    <property type="entry name" value="SAP domain"/>
    <property type="match status" value="1"/>
</dbReference>
<dbReference type="PROSITE" id="PS50800">
    <property type="entry name" value="SAP"/>
    <property type="match status" value="1"/>
</dbReference>